<reference key="1">
    <citation type="submission" date="2006-08" db="EMBL/GenBank/DDBJ databases">
        <title>Complete sequence of chromosome 1 of Burkholderia cenocepacia HI2424.</title>
        <authorList>
            <person name="Copeland A."/>
            <person name="Lucas S."/>
            <person name="Lapidus A."/>
            <person name="Barry K."/>
            <person name="Detter J.C."/>
            <person name="Glavina del Rio T."/>
            <person name="Hammon N."/>
            <person name="Israni S."/>
            <person name="Pitluck S."/>
            <person name="Chain P."/>
            <person name="Malfatti S."/>
            <person name="Shin M."/>
            <person name="Vergez L."/>
            <person name="Schmutz J."/>
            <person name="Larimer F."/>
            <person name="Land M."/>
            <person name="Hauser L."/>
            <person name="Kyrpides N."/>
            <person name="Kim E."/>
            <person name="LiPuma J.J."/>
            <person name="Gonzalez C.F."/>
            <person name="Konstantinidis K."/>
            <person name="Tiedje J.M."/>
            <person name="Richardson P."/>
        </authorList>
    </citation>
    <scope>NUCLEOTIDE SEQUENCE [LARGE SCALE GENOMIC DNA]</scope>
    <source>
        <strain>HI2424</strain>
    </source>
</reference>
<keyword id="KW-0030">Aminoacyl-tRNA synthetase</keyword>
<keyword id="KW-0067">ATP-binding</keyword>
<keyword id="KW-0963">Cytoplasm</keyword>
<keyword id="KW-0436">Ligase</keyword>
<keyword id="KW-0479">Metal-binding</keyword>
<keyword id="KW-0547">Nucleotide-binding</keyword>
<keyword id="KW-0648">Protein biosynthesis</keyword>
<keyword id="KW-0694">RNA-binding</keyword>
<keyword id="KW-0820">tRNA-binding</keyword>
<keyword id="KW-0862">Zinc</keyword>
<proteinExistence type="inferred from homology"/>
<protein>
    <recommendedName>
        <fullName evidence="1">Alanine--tRNA ligase</fullName>
        <ecNumber evidence="1">6.1.1.7</ecNumber>
    </recommendedName>
    <alternativeName>
        <fullName evidence="1">Alanyl-tRNA synthetase</fullName>
        <shortName evidence="1">AlaRS</shortName>
    </alternativeName>
</protein>
<comment type="function">
    <text evidence="1">Catalyzes the attachment of alanine to tRNA(Ala) in a two-step reaction: alanine is first activated by ATP to form Ala-AMP and then transferred to the acceptor end of tRNA(Ala). Also edits incorrectly charged Ser-tRNA(Ala) and Gly-tRNA(Ala) via its editing domain.</text>
</comment>
<comment type="catalytic activity">
    <reaction evidence="1">
        <text>tRNA(Ala) + L-alanine + ATP = L-alanyl-tRNA(Ala) + AMP + diphosphate</text>
        <dbReference type="Rhea" id="RHEA:12540"/>
        <dbReference type="Rhea" id="RHEA-COMP:9657"/>
        <dbReference type="Rhea" id="RHEA-COMP:9923"/>
        <dbReference type="ChEBI" id="CHEBI:30616"/>
        <dbReference type="ChEBI" id="CHEBI:33019"/>
        <dbReference type="ChEBI" id="CHEBI:57972"/>
        <dbReference type="ChEBI" id="CHEBI:78442"/>
        <dbReference type="ChEBI" id="CHEBI:78497"/>
        <dbReference type="ChEBI" id="CHEBI:456215"/>
        <dbReference type="EC" id="6.1.1.7"/>
    </reaction>
</comment>
<comment type="cofactor">
    <cofactor evidence="1">
        <name>Zn(2+)</name>
        <dbReference type="ChEBI" id="CHEBI:29105"/>
    </cofactor>
    <text evidence="1">Binds 1 zinc ion per subunit.</text>
</comment>
<comment type="subcellular location">
    <subcellularLocation>
        <location evidence="1">Cytoplasm</location>
    </subcellularLocation>
</comment>
<comment type="domain">
    <text evidence="1">Consists of three domains; the N-terminal catalytic domain, the editing domain and the C-terminal C-Ala domain. The editing domain removes incorrectly charged amino acids, while the C-Ala domain, along with tRNA(Ala), serves as a bridge to cooperatively bring together the editing and aminoacylation centers thus stimulating deacylation of misacylated tRNAs.</text>
</comment>
<comment type="similarity">
    <text evidence="1">Belongs to the class-II aminoacyl-tRNA synthetase family.</text>
</comment>
<comment type="sequence caution" evidence="2">
    <conflict type="erroneous initiation">
        <sequence resource="EMBL-CDS" id="ABK08161"/>
    </conflict>
</comment>
<gene>
    <name evidence="1" type="primary">alaS</name>
    <name type="ordered locus">Bcen2424_1409</name>
</gene>
<sequence length="874" mass="95497">MKAAEIREKFLKFFESKGHTIVRSSSLVPGNDPTLMFTNSGMVQFKDVFLGTDPRPYSRATTAQRSVRAGGKHNDLENVGYTARHHTFFEMLGNFSFGDYFKHDAIKFAWELLTTVYQLPKDKLWVTVYQEDDEAYDIWAKEVGVPTERIIRIGDNKGARYASDNFWTMGDTGPCGPCTEIFYDHGPDVWGGPPGSPEEDGDRYIEIWNLVFMQFNRDAQGNMTRLPKQSVDTGMGLERLAAVLQHVHSNYEIDLFQNLIKAAARVTEISDLTNNSLKVIADHIRACSFLIVDGVIPGNEGRGYVLRRIVRRAIRHGYKLGRKGAFFHKLVADLVAEMGTAYPELKEAEQRVTDVLRQEEERFFETIEHGMSILEAALAEVEAKGGKVLDGELAFKLHDTYGFPLDLTADVCRERGMTVDEPAFDDAMARQREQARAAGKFKATQGLEYSGAKTTFHGYEEIAFDDAKVVALYVDGSAVNEVKAGQDAVVVLDHTPFYAESGGQVGDQGVLANAATRFAVADTLKVQADVIGHHGTLEQGTLKVGDVLRAEIDAQRRARTQRNHSATHLMHKALREVLGAHVQQKGSLVDADKTRFDFAHNAPMTDDEIRRVEQIVNNEILANAPGIVRVMPYDEAVKGGAMALFGEKYGDEVRVLDLGFSRELCGGTHVHRTGDIGLFKIVVEGGVAAGIRRVEAITGDNAVRYVQELDARVNEAAAALKAQPSELTQRIAQVQEQVKSLEKELGALKSKLASSQGDELAQQAVEVAGVYVLAATLDGADAKTLRETVDKLKDKLKSAAIVLAAVEGGKVSLIAGVTPDASKKVKAGELVNFVAQQVGGKGGGRPDMAQAGGTEPANLPGALAGVKGWVEERL</sequence>
<accession>A0K6N4</accession>
<name>SYA_BURCH</name>
<organism>
    <name type="scientific">Burkholderia cenocepacia (strain HI2424)</name>
    <dbReference type="NCBI Taxonomy" id="331272"/>
    <lineage>
        <taxon>Bacteria</taxon>
        <taxon>Pseudomonadati</taxon>
        <taxon>Pseudomonadota</taxon>
        <taxon>Betaproteobacteria</taxon>
        <taxon>Burkholderiales</taxon>
        <taxon>Burkholderiaceae</taxon>
        <taxon>Burkholderia</taxon>
        <taxon>Burkholderia cepacia complex</taxon>
    </lineage>
</organism>
<feature type="chain" id="PRO_0000347522" description="Alanine--tRNA ligase">
    <location>
        <begin position="1"/>
        <end position="874"/>
    </location>
</feature>
<feature type="binding site" evidence="1">
    <location>
        <position position="564"/>
    </location>
    <ligand>
        <name>Zn(2+)</name>
        <dbReference type="ChEBI" id="CHEBI:29105"/>
    </ligand>
</feature>
<feature type="binding site" evidence="1">
    <location>
        <position position="568"/>
    </location>
    <ligand>
        <name>Zn(2+)</name>
        <dbReference type="ChEBI" id="CHEBI:29105"/>
    </ligand>
</feature>
<feature type="binding site" evidence="1">
    <location>
        <position position="665"/>
    </location>
    <ligand>
        <name>Zn(2+)</name>
        <dbReference type="ChEBI" id="CHEBI:29105"/>
    </ligand>
</feature>
<feature type="binding site" evidence="1">
    <location>
        <position position="669"/>
    </location>
    <ligand>
        <name>Zn(2+)</name>
        <dbReference type="ChEBI" id="CHEBI:29105"/>
    </ligand>
</feature>
<dbReference type="EC" id="6.1.1.7" evidence="1"/>
<dbReference type="EMBL" id="CP000458">
    <property type="protein sequence ID" value="ABK08161.1"/>
    <property type="status" value="ALT_INIT"/>
    <property type="molecule type" value="Genomic_DNA"/>
</dbReference>
<dbReference type="RefSeq" id="WP_041489603.1">
    <property type="nucleotide sequence ID" value="NC_008542.1"/>
</dbReference>
<dbReference type="SMR" id="A0K6N4"/>
<dbReference type="KEGG" id="bch:Bcen2424_1409"/>
<dbReference type="HOGENOM" id="CLU_004485_1_1_4"/>
<dbReference type="GO" id="GO:0005829">
    <property type="term" value="C:cytosol"/>
    <property type="evidence" value="ECO:0007669"/>
    <property type="project" value="TreeGrafter"/>
</dbReference>
<dbReference type="GO" id="GO:0004813">
    <property type="term" value="F:alanine-tRNA ligase activity"/>
    <property type="evidence" value="ECO:0007669"/>
    <property type="project" value="UniProtKB-UniRule"/>
</dbReference>
<dbReference type="GO" id="GO:0002161">
    <property type="term" value="F:aminoacyl-tRNA deacylase activity"/>
    <property type="evidence" value="ECO:0007669"/>
    <property type="project" value="TreeGrafter"/>
</dbReference>
<dbReference type="GO" id="GO:0005524">
    <property type="term" value="F:ATP binding"/>
    <property type="evidence" value="ECO:0007669"/>
    <property type="project" value="UniProtKB-UniRule"/>
</dbReference>
<dbReference type="GO" id="GO:0000049">
    <property type="term" value="F:tRNA binding"/>
    <property type="evidence" value="ECO:0007669"/>
    <property type="project" value="UniProtKB-KW"/>
</dbReference>
<dbReference type="GO" id="GO:0008270">
    <property type="term" value="F:zinc ion binding"/>
    <property type="evidence" value="ECO:0007669"/>
    <property type="project" value="UniProtKB-UniRule"/>
</dbReference>
<dbReference type="GO" id="GO:0006419">
    <property type="term" value="P:alanyl-tRNA aminoacylation"/>
    <property type="evidence" value="ECO:0007669"/>
    <property type="project" value="UniProtKB-UniRule"/>
</dbReference>
<dbReference type="GO" id="GO:0045892">
    <property type="term" value="P:negative regulation of DNA-templated transcription"/>
    <property type="evidence" value="ECO:0007669"/>
    <property type="project" value="TreeGrafter"/>
</dbReference>
<dbReference type="CDD" id="cd00673">
    <property type="entry name" value="AlaRS_core"/>
    <property type="match status" value="1"/>
</dbReference>
<dbReference type="FunFam" id="2.40.30.130:FF:000001">
    <property type="entry name" value="Alanine--tRNA ligase"/>
    <property type="match status" value="1"/>
</dbReference>
<dbReference type="FunFam" id="3.10.310.40:FF:000001">
    <property type="entry name" value="Alanine--tRNA ligase"/>
    <property type="match status" value="1"/>
</dbReference>
<dbReference type="FunFam" id="3.30.54.20:FF:000001">
    <property type="entry name" value="Alanine--tRNA ligase"/>
    <property type="match status" value="1"/>
</dbReference>
<dbReference type="FunFam" id="3.30.930.10:FF:000004">
    <property type="entry name" value="Alanine--tRNA ligase"/>
    <property type="match status" value="1"/>
</dbReference>
<dbReference type="FunFam" id="3.30.980.10:FF:000004">
    <property type="entry name" value="Alanine--tRNA ligase, cytoplasmic"/>
    <property type="match status" value="1"/>
</dbReference>
<dbReference type="Gene3D" id="2.40.30.130">
    <property type="match status" value="1"/>
</dbReference>
<dbReference type="Gene3D" id="3.10.310.40">
    <property type="match status" value="1"/>
</dbReference>
<dbReference type="Gene3D" id="3.30.54.20">
    <property type="match status" value="1"/>
</dbReference>
<dbReference type="Gene3D" id="6.10.250.550">
    <property type="match status" value="1"/>
</dbReference>
<dbReference type="Gene3D" id="3.30.930.10">
    <property type="entry name" value="Bira Bifunctional Protein, Domain 2"/>
    <property type="match status" value="1"/>
</dbReference>
<dbReference type="Gene3D" id="3.30.980.10">
    <property type="entry name" value="Threonyl-trna Synthetase, Chain A, domain 2"/>
    <property type="match status" value="1"/>
</dbReference>
<dbReference type="HAMAP" id="MF_00036_B">
    <property type="entry name" value="Ala_tRNA_synth_B"/>
    <property type="match status" value="1"/>
</dbReference>
<dbReference type="InterPro" id="IPR045864">
    <property type="entry name" value="aa-tRNA-synth_II/BPL/LPL"/>
</dbReference>
<dbReference type="InterPro" id="IPR002318">
    <property type="entry name" value="Ala-tRNA-lgiase_IIc"/>
</dbReference>
<dbReference type="InterPro" id="IPR018162">
    <property type="entry name" value="Ala-tRNA-ligase_IIc_anticod-bd"/>
</dbReference>
<dbReference type="InterPro" id="IPR018165">
    <property type="entry name" value="Ala-tRNA-synth_IIc_core"/>
</dbReference>
<dbReference type="InterPro" id="IPR018164">
    <property type="entry name" value="Ala-tRNA-synth_IIc_N"/>
</dbReference>
<dbReference type="InterPro" id="IPR050058">
    <property type="entry name" value="Ala-tRNA_ligase"/>
</dbReference>
<dbReference type="InterPro" id="IPR023033">
    <property type="entry name" value="Ala_tRNA_ligase_euk/bac"/>
</dbReference>
<dbReference type="InterPro" id="IPR003156">
    <property type="entry name" value="DHHA1_dom"/>
</dbReference>
<dbReference type="InterPro" id="IPR018163">
    <property type="entry name" value="Thr/Ala-tRNA-synth_IIc_edit"/>
</dbReference>
<dbReference type="InterPro" id="IPR009000">
    <property type="entry name" value="Transl_B-barrel_sf"/>
</dbReference>
<dbReference type="InterPro" id="IPR012947">
    <property type="entry name" value="tRNA_SAD"/>
</dbReference>
<dbReference type="NCBIfam" id="TIGR00344">
    <property type="entry name" value="alaS"/>
    <property type="match status" value="1"/>
</dbReference>
<dbReference type="PANTHER" id="PTHR11777:SF9">
    <property type="entry name" value="ALANINE--TRNA LIGASE, CYTOPLASMIC"/>
    <property type="match status" value="1"/>
</dbReference>
<dbReference type="PANTHER" id="PTHR11777">
    <property type="entry name" value="ALANYL-TRNA SYNTHETASE"/>
    <property type="match status" value="1"/>
</dbReference>
<dbReference type="Pfam" id="PF02272">
    <property type="entry name" value="DHHA1"/>
    <property type="match status" value="1"/>
</dbReference>
<dbReference type="Pfam" id="PF01411">
    <property type="entry name" value="tRNA-synt_2c"/>
    <property type="match status" value="1"/>
</dbReference>
<dbReference type="Pfam" id="PF07973">
    <property type="entry name" value="tRNA_SAD"/>
    <property type="match status" value="1"/>
</dbReference>
<dbReference type="PRINTS" id="PR00980">
    <property type="entry name" value="TRNASYNTHALA"/>
</dbReference>
<dbReference type="SMART" id="SM00863">
    <property type="entry name" value="tRNA_SAD"/>
    <property type="match status" value="1"/>
</dbReference>
<dbReference type="SUPFAM" id="SSF55681">
    <property type="entry name" value="Class II aaRS and biotin synthetases"/>
    <property type="match status" value="1"/>
</dbReference>
<dbReference type="SUPFAM" id="SSF101353">
    <property type="entry name" value="Putative anticodon-binding domain of alanyl-tRNA synthetase (AlaRS)"/>
    <property type="match status" value="1"/>
</dbReference>
<dbReference type="SUPFAM" id="SSF55186">
    <property type="entry name" value="ThrRS/AlaRS common domain"/>
    <property type="match status" value="1"/>
</dbReference>
<dbReference type="SUPFAM" id="SSF50447">
    <property type="entry name" value="Translation proteins"/>
    <property type="match status" value="1"/>
</dbReference>
<dbReference type="PROSITE" id="PS50860">
    <property type="entry name" value="AA_TRNA_LIGASE_II_ALA"/>
    <property type="match status" value="1"/>
</dbReference>
<evidence type="ECO:0000255" key="1">
    <source>
        <dbReference type="HAMAP-Rule" id="MF_00036"/>
    </source>
</evidence>
<evidence type="ECO:0000305" key="2"/>